<name>AROK_BACLD</name>
<organism>
    <name type="scientific">Bacillus licheniformis (strain ATCC 14580 / DSM 13 / JCM 2505 / CCUG 7422 / NBRC 12200 / NCIMB 9375 / NCTC 10341 / NRRL NRS-1264 / Gibson 46)</name>
    <dbReference type="NCBI Taxonomy" id="279010"/>
    <lineage>
        <taxon>Bacteria</taxon>
        <taxon>Bacillati</taxon>
        <taxon>Bacillota</taxon>
        <taxon>Bacilli</taxon>
        <taxon>Bacillales</taxon>
        <taxon>Bacillaceae</taxon>
        <taxon>Bacillus</taxon>
    </lineage>
</organism>
<reference key="1">
    <citation type="journal article" date="2004" name="J. Mol. Microbiol. Biotechnol.">
        <title>The complete genome sequence of Bacillus licheniformis DSM13, an organism with great industrial potential.</title>
        <authorList>
            <person name="Veith B."/>
            <person name="Herzberg C."/>
            <person name="Steckel S."/>
            <person name="Feesche J."/>
            <person name="Maurer K.H."/>
            <person name="Ehrenreich P."/>
            <person name="Baeumer S."/>
            <person name="Henne A."/>
            <person name="Liesegang H."/>
            <person name="Merkl R."/>
            <person name="Ehrenreich A."/>
            <person name="Gottschalk G."/>
        </authorList>
    </citation>
    <scope>NUCLEOTIDE SEQUENCE [LARGE SCALE GENOMIC DNA]</scope>
    <source>
        <strain>ATCC 14580 / DSM 13 / JCM 2505 / CCUG 7422 / NBRC 12200 / NCIMB 9375 / NCTC 10341 / NRRL NRS-1264 / Gibson 46</strain>
    </source>
</reference>
<reference key="2">
    <citation type="journal article" date="2004" name="Genome Biol.">
        <title>Complete genome sequence of the industrial bacterium Bacillus licheniformis and comparisons with closely related Bacillus species.</title>
        <authorList>
            <person name="Rey M.W."/>
            <person name="Ramaiya P."/>
            <person name="Nelson B.A."/>
            <person name="Brody-Karpin S.D."/>
            <person name="Zaretsky E.J."/>
            <person name="Tang M."/>
            <person name="Lopez de Leon A."/>
            <person name="Xiang H."/>
            <person name="Gusti V."/>
            <person name="Clausen I.G."/>
            <person name="Olsen P.B."/>
            <person name="Rasmussen M.D."/>
            <person name="Andersen J.T."/>
            <person name="Joergensen P.L."/>
            <person name="Larsen T.S."/>
            <person name="Sorokin A."/>
            <person name="Bolotin A."/>
            <person name="Lapidus A."/>
            <person name="Galleron N."/>
            <person name="Ehrlich S.D."/>
            <person name="Berka R.M."/>
        </authorList>
    </citation>
    <scope>NUCLEOTIDE SEQUENCE [LARGE SCALE GENOMIC DNA]</scope>
    <source>
        <strain>ATCC 14580 / DSM 13 / JCM 2505 / CCUG 7422 / NBRC 12200 / NCIMB 9375 / NCTC 10341 / NRRL NRS-1264 / Gibson 46</strain>
    </source>
</reference>
<feature type="chain" id="PRO_0000237841" description="Shikimate kinase">
    <location>
        <begin position="1"/>
        <end position="177"/>
    </location>
</feature>
<feature type="binding site" evidence="1">
    <location>
        <begin position="17"/>
        <end position="22"/>
    </location>
    <ligand>
        <name>ATP</name>
        <dbReference type="ChEBI" id="CHEBI:30616"/>
    </ligand>
</feature>
<feature type="binding site" evidence="1">
    <location>
        <position position="21"/>
    </location>
    <ligand>
        <name>Mg(2+)</name>
        <dbReference type="ChEBI" id="CHEBI:18420"/>
    </ligand>
</feature>
<feature type="binding site" evidence="1">
    <location>
        <position position="39"/>
    </location>
    <ligand>
        <name>substrate</name>
    </ligand>
</feature>
<feature type="binding site" evidence="1">
    <location>
        <position position="63"/>
    </location>
    <ligand>
        <name>substrate</name>
    </ligand>
</feature>
<feature type="binding site" evidence="1">
    <location>
        <position position="86"/>
    </location>
    <ligand>
        <name>substrate</name>
    </ligand>
</feature>
<feature type="binding site" evidence="1">
    <location>
        <position position="125"/>
    </location>
    <ligand>
        <name>ATP</name>
        <dbReference type="ChEBI" id="CHEBI:30616"/>
    </ligand>
</feature>
<feature type="binding site" evidence="1">
    <location>
        <position position="143"/>
    </location>
    <ligand>
        <name>substrate</name>
    </ligand>
</feature>
<feature type="binding site" evidence="1">
    <location>
        <position position="159"/>
    </location>
    <ligand>
        <name>ATP</name>
        <dbReference type="ChEBI" id="CHEBI:30616"/>
    </ligand>
</feature>
<accession>Q65NN5</accession>
<accession>Q62Z33</accession>
<keyword id="KW-0028">Amino-acid biosynthesis</keyword>
<keyword id="KW-0057">Aromatic amino acid biosynthesis</keyword>
<keyword id="KW-0067">ATP-binding</keyword>
<keyword id="KW-0963">Cytoplasm</keyword>
<keyword id="KW-0418">Kinase</keyword>
<keyword id="KW-0460">Magnesium</keyword>
<keyword id="KW-0479">Metal-binding</keyword>
<keyword id="KW-0547">Nucleotide-binding</keyword>
<keyword id="KW-1185">Reference proteome</keyword>
<keyword id="KW-0808">Transferase</keyword>
<sequence>MNAAIRDKNIVLIGFMGVGKTTIGQLVSKKLGRDFIDIDHEIEKDFQMTIPEMFQQKGEAFFRQTEKEYIFQMCEHTMGNIVSLGGGAFQQEEIRKKCLEHCFVIFLDLRWENWKQRMDLLIENRPVLHNRTIEEMKQLFNERKSIYAFHHLKVETDNRSAEETADYIVEMLKLGQS</sequence>
<gene>
    <name evidence="1" type="primary">aroK</name>
    <name type="ordered locus">BLi00371</name>
    <name type="ordered locus">BL01707</name>
</gene>
<comment type="function">
    <text evidence="1">Catalyzes the specific phosphorylation of the 3-hydroxyl group of shikimic acid using ATP as a cosubstrate.</text>
</comment>
<comment type="catalytic activity">
    <reaction evidence="1">
        <text>shikimate + ATP = 3-phosphoshikimate + ADP + H(+)</text>
        <dbReference type="Rhea" id="RHEA:13121"/>
        <dbReference type="ChEBI" id="CHEBI:15378"/>
        <dbReference type="ChEBI" id="CHEBI:30616"/>
        <dbReference type="ChEBI" id="CHEBI:36208"/>
        <dbReference type="ChEBI" id="CHEBI:145989"/>
        <dbReference type="ChEBI" id="CHEBI:456216"/>
        <dbReference type="EC" id="2.7.1.71"/>
    </reaction>
</comment>
<comment type="cofactor">
    <cofactor evidence="1">
        <name>Mg(2+)</name>
        <dbReference type="ChEBI" id="CHEBI:18420"/>
    </cofactor>
    <text evidence="1">Binds 1 Mg(2+) ion per subunit.</text>
</comment>
<comment type="pathway">
    <text evidence="1">Metabolic intermediate biosynthesis; chorismate biosynthesis; chorismate from D-erythrose 4-phosphate and phosphoenolpyruvate: step 5/7.</text>
</comment>
<comment type="subunit">
    <text evidence="1">Monomer.</text>
</comment>
<comment type="subcellular location">
    <subcellularLocation>
        <location evidence="1">Cytoplasm</location>
    </subcellularLocation>
</comment>
<comment type="similarity">
    <text evidence="1">Belongs to the shikimate kinase family.</text>
</comment>
<evidence type="ECO:0000255" key="1">
    <source>
        <dbReference type="HAMAP-Rule" id="MF_00109"/>
    </source>
</evidence>
<proteinExistence type="inferred from homology"/>
<protein>
    <recommendedName>
        <fullName evidence="1">Shikimate kinase</fullName>
        <shortName evidence="1">SK</shortName>
        <ecNumber evidence="1">2.7.1.71</ecNumber>
    </recommendedName>
</protein>
<dbReference type="EC" id="2.7.1.71" evidence="1"/>
<dbReference type="EMBL" id="AE017333">
    <property type="protein sequence ID" value="AAU39329.1"/>
    <property type="molecule type" value="Genomic_DNA"/>
</dbReference>
<dbReference type="EMBL" id="CP000002">
    <property type="protein sequence ID" value="AAU21975.1"/>
    <property type="molecule type" value="Genomic_DNA"/>
</dbReference>
<dbReference type="RefSeq" id="WP_009330247.1">
    <property type="nucleotide sequence ID" value="NC_006322.1"/>
</dbReference>
<dbReference type="SMR" id="Q65NN5"/>
<dbReference type="STRING" id="279010.BL01707"/>
<dbReference type="KEGG" id="bld:BLi00371"/>
<dbReference type="KEGG" id="bli:BL01707"/>
<dbReference type="eggNOG" id="COG0703">
    <property type="taxonomic scope" value="Bacteria"/>
</dbReference>
<dbReference type="HOGENOM" id="CLU_057607_4_3_9"/>
<dbReference type="UniPathway" id="UPA00053">
    <property type="reaction ID" value="UER00088"/>
</dbReference>
<dbReference type="Proteomes" id="UP000000606">
    <property type="component" value="Chromosome"/>
</dbReference>
<dbReference type="GO" id="GO:0005829">
    <property type="term" value="C:cytosol"/>
    <property type="evidence" value="ECO:0007669"/>
    <property type="project" value="TreeGrafter"/>
</dbReference>
<dbReference type="GO" id="GO:0005524">
    <property type="term" value="F:ATP binding"/>
    <property type="evidence" value="ECO:0007669"/>
    <property type="project" value="UniProtKB-UniRule"/>
</dbReference>
<dbReference type="GO" id="GO:0000287">
    <property type="term" value="F:magnesium ion binding"/>
    <property type="evidence" value="ECO:0007669"/>
    <property type="project" value="UniProtKB-UniRule"/>
</dbReference>
<dbReference type="GO" id="GO:0004765">
    <property type="term" value="F:shikimate kinase activity"/>
    <property type="evidence" value="ECO:0007669"/>
    <property type="project" value="UniProtKB-UniRule"/>
</dbReference>
<dbReference type="GO" id="GO:0008652">
    <property type="term" value="P:amino acid biosynthetic process"/>
    <property type="evidence" value="ECO:0007669"/>
    <property type="project" value="UniProtKB-KW"/>
</dbReference>
<dbReference type="GO" id="GO:0009073">
    <property type="term" value="P:aromatic amino acid family biosynthetic process"/>
    <property type="evidence" value="ECO:0007669"/>
    <property type="project" value="UniProtKB-KW"/>
</dbReference>
<dbReference type="GO" id="GO:0009423">
    <property type="term" value="P:chorismate biosynthetic process"/>
    <property type="evidence" value="ECO:0007669"/>
    <property type="project" value="UniProtKB-UniRule"/>
</dbReference>
<dbReference type="CDD" id="cd00464">
    <property type="entry name" value="SK"/>
    <property type="match status" value="1"/>
</dbReference>
<dbReference type="Gene3D" id="3.40.50.300">
    <property type="entry name" value="P-loop containing nucleotide triphosphate hydrolases"/>
    <property type="match status" value="1"/>
</dbReference>
<dbReference type="HAMAP" id="MF_00109">
    <property type="entry name" value="Shikimate_kinase"/>
    <property type="match status" value="1"/>
</dbReference>
<dbReference type="InterPro" id="IPR027417">
    <property type="entry name" value="P-loop_NTPase"/>
</dbReference>
<dbReference type="InterPro" id="IPR031322">
    <property type="entry name" value="Shikimate/glucono_kinase"/>
</dbReference>
<dbReference type="InterPro" id="IPR000623">
    <property type="entry name" value="Shikimate_kinase/TSH1"/>
</dbReference>
<dbReference type="InterPro" id="IPR023000">
    <property type="entry name" value="Shikimate_kinase_CS"/>
</dbReference>
<dbReference type="PANTHER" id="PTHR21087">
    <property type="entry name" value="SHIKIMATE KINASE"/>
    <property type="match status" value="1"/>
</dbReference>
<dbReference type="PANTHER" id="PTHR21087:SF16">
    <property type="entry name" value="SHIKIMATE KINASE 1, CHLOROPLASTIC"/>
    <property type="match status" value="1"/>
</dbReference>
<dbReference type="Pfam" id="PF01202">
    <property type="entry name" value="SKI"/>
    <property type="match status" value="1"/>
</dbReference>
<dbReference type="PRINTS" id="PR01100">
    <property type="entry name" value="SHIKIMTKNASE"/>
</dbReference>
<dbReference type="SUPFAM" id="SSF52540">
    <property type="entry name" value="P-loop containing nucleoside triphosphate hydrolases"/>
    <property type="match status" value="1"/>
</dbReference>
<dbReference type="PROSITE" id="PS01128">
    <property type="entry name" value="SHIKIMATE_KINASE"/>
    <property type="match status" value="1"/>
</dbReference>